<evidence type="ECO:0000255" key="1">
    <source>
        <dbReference type="HAMAP-Rule" id="MF_01160"/>
    </source>
</evidence>
<accession>B7NG75</accession>
<keyword id="KW-0186">Copper</keyword>
<keyword id="KW-0963">Cytoplasm</keyword>
<keyword id="KW-0479">Metal-binding</keyword>
<comment type="function">
    <text evidence="1">Involved in resistance toward heavy metals.</text>
</comment>
<comment type="cofactor">
    <cofactor evidence="1">
        <name>Cu cation</name>
        <dbReference type="ChEBI" id="CHEBI:23378"/>
    </cofactor>
    <text evidence="1">Binds 1 copper ion per subunit.</text>
</comment>
<comment type="subunit">
    <text evidence="1">Homotrimer.</text>
</comment>
<comment type="subcellular location">
    <subcellularLocation>
        <location evidence="1">Cytoplasm</location>
    </subcellularLocation>
</comment>
<comment type="similarity">
    <text evidence="1">Belongs to the CutA family.</text>
</comment>
<dbReference type="EMBL" id="CU928163">
    <property type="protein sequence ID" value="CAR15787.1"/>
    <property type="molecule type" value="Genomic_DNA"/>
</dbReference>
<dbReference type="RefSeq" id="WP_000883400.1">
    <property type="nucleotide sequence ID" value="NC_011751.1"/>
</dbReference>
<dbReference type="RefSeq" id="YP_002415271.1">
    <property type="nucleotide sequence ID" value="NC_011751.1"/>
</dbReference>
<dbReference type="SMR" id="B7NG75"/>
<dbReference type="STRING" id="585056.ECUMN_4672"/>
<dbReference type="GeneID" id="93777687"/>
<dbReference type="KEGG" id="eum:ECUMN_4672"/>
<dbReference type="PATRIC" id="fig|585056.7.peg.4835"/>
<dbReference type="HOGENOM" id="CLU_098807_3_0_6"/>
<dbReference type="Proteomes" id="UP000007097">
    <property type="component" value="Chromosome"/>
</dbReference>
<dbReference type="GO" id="GO:0005737">
    <property type="term" value="C:cytoplasm"/>
    <property type="evidence" value="ECO:0007669"/>
    <property type="project" value="UniProtKB-SubCell"/>
</dbReference>
<dbReference type="GO" id="GO:0005507">
    <property type="term" value="F:copper ion binding"/>
    <property type="evidence" value="ECO:0007669"/>
    <property type="project" value="UniProtKB-UniRule"/>
</dbReference>
<dbReference type="GO" id="GO:0010038">
    <property type="term" value="P:response to metal ion"/>
    <property type="evidence" value="ECO:0007669"/>
    <property type="project" value="InterPro"/>
</dbReference>
<dbReference type="FunFam" id="3.30.70.120:FF:000004">
    <property type="entry name" value="Divalent-cation tolerance protein CutA"/>
    <property type="match status" value="1"/>
</dbReference>
<dbReference type="Gene3D" id="3.30.70.120">
    <property type="match status" value="1"/>
</dbReference>
<dbReference type="HAMAP" id="MF_01160">
    <property type="entry name" value="CutA"/>
    <property type="match status" value="1"/>
</dbReference>
<dbReference type="InterPro" id="IPR023700">
    <property type="entry name" value="CutA_Enterobact"/>
</dbReference>
<dbReference type="InterPro" id="IPR004323">
    <property type="entry name" value="Ion_tolerance_CutA"/>
</dbReference>
<dbReference type="InterPro" id="IPR011322">
    <property type="entry name" value="N-reg_PII-like_a/b"/>
</dbReference>
<dbReference type="InterPro" id="IPR015867">
    <property type="entry name" value="N-reg_PII/ATP_PRibTrfase_C"/>
</dbReference>
<dbReference type="NCBIfam" id="NF007930">
    <property type="entry name" value="PRK10645.1"/>
    <property type="match status" value="1"/>
</dbReference>
<dbReference type="PANTHER" id="PTHR23419">
    <property type="entry name" value="DIVALENT CATION TOLERANCE CUTA-RELATED"/>
    <property type="match status" value="1"/>
</dbReference>
<dbReference type="PANTHER" id="PTHR23419:SF8">
    <property type="entry name" value="FI09726P"/>
    <property type="match status" value="1"/>
</dbReference>
<dbReference type="Pfam" id="PF03091">
    <property type="entry name" value="CutA1"/>
    <property type="match status" value="1"/>
</dbReference>
<dbReference type="SUPFAM" id="SSF54913">
    <property type="entry name" value="GlnB-like"/>
    <property type="match status" value="1"/>
</dbReference>
<proteinExistence type="inferred from homology"/>
<organism>
    <name type="scientific">Escherichia coli O17:K52:H18 (strain UMN026 / ExPEC)</name>
    <dbReference type="NCBI Taxonomy" id="585056"/>
    <lineage>
        <taxon>Bacteria</taxon>
        <taxon>Pseudomonadati</taxon>
        <taxon>Pseudomonadota</taxon>
        <taxon>Gammaproteobacteria</taxon>
        <taxon>Enterobacterales</taxon>
        <taxon>Enterobacteriaceae</taxon>
        <taxon>Escherichia</taxon>
    </lineage>
</organism>
<sequence>MLDEKSSNTASVVVLCTAPDEATAQDLAAKVLAEKLAACATLIPGATSLYYWEGKLEQEYEVQMILKTTVSHQQALLECLKSHHPYQTPELLVLPVTHGDTDYLSWLNASLR</sequence>
<gene>
    <name evidence="1" type="primary">cutA</name>
    <name type="ordered locus">ECUMN_4672</name>
</gene>
<name>CUTA_ECOLU</name>
<protein>
    <recommendedName>
        <fullName evidence="1">Divalent-cation tolerance protein CutA</fullName>
    </recommendedName>
</protein>
<feature type="chain" id="PRO_1000137844" description="Divalent-cation tolerance protein CutA">
    <location>
        <begin position="1"/>
        <end position="112"/>
    </location>
</feature>
<feature type="binding site" evidence="1">
    <location>
        <position position="16"/>
    </location>
    <ligand>
        <name>Cu cation</name>
        <dbReference type="ChEBI" id="CHEBI:23378"/>
    </ligand>
</feature>
<feature type="binding site" evidence="1">
    <location>
        <position position="83"/>
    </location>
    <ligand>
        <name>Cu cation</name>
        <dbReference type="ChEBI" id="CHEBI:23378"/>
    </ligand>
</feature>
<feature type="binding site" evidence="1">
    <location>
        <position position="84"/>
    </location>
    <ligand>
        <name>Cu cation</name>
        <dbReference type="ChEBI" id="CHEBI:23378"/>
    </ligand>
</feature>
<reference key="1">
    <citation type="journal article" date="2009" name="PLoS Genet.">
        <title>Organised genome dynamics in the Escherichia coli species results in highly diverse adaptive paths.</title>
        <authorList>
            <person name="Touchon M."/>
            <person name="Hoede C."/>
            <person name="Tenaillon O."/>
            <person name="Barbe V."/>
            <person name="Baeriswyl S."/>
            <person name="Bidet P."/>
            <person name="Bingen E."/>
            <person name="Bonacorsi S."/>
            <person name="Bouchier C."/>
            <person name="Bouvet O."/>
            <person name="Calteau A."/>
            <person name="Chiapello H."/>
            <person name="Clermont O."/>
            <person name="Cruveiller S."/>
            <person name="Danchin A."/>
            <person name="Diard M."/>
            <person name="Dossat C."/>
            <person name="Karoui M.E."/>
            <person name="Frapy E."/>
            <person name="Garry L."/>
            <person name="Ghigo J.M."/>
            <person name="Gilles A.M."/>
            <person name="Johnson J."/>
            <person name="Le Bouguenec C."/>
            <person name="Lescat M."/>
            <person name="Mangenot S."/>
            <person name="Martinez-Jehanne V."/>
            <person name="Matic I."/>
            <person name="Nassif X."/>
            <person name="Oztas S."/>
            <person name="Petit M.A."/>
            <person name="Pichon C."/>
            <person name="Rouy Z."/>
            <person name="Ruf C.S."/>
            <person name="Schneider D."/>
            <person name="Tourret J."/>
            <person name="Vacherie B."/>
            <person name="Vallenet D."/>
            <person name="Medigue C."/>
            <person name="Rocha E.P.C."/>
            <person name="Denamur E."/>
        </authorList>
    </citation>
    <scope>NUCLEOTIDE SEQUENCE [LARGE SCALE GENOMIC DNA]</scope>
    <source>
        <strain>UMN026 / ExPEC</strain>
    </source>
</reference>